<proteinExistence type="inferred from homology"/>
<keyword id="KW-0030">Aminoacyl-tRNA synthetase</keyword>
<keyword id="KW-0067">ATP-binding</keyword>
<keyword id="KW-0963">Cytoplasm</keyword>
<keyword id="KW-0436">Ligase</keyword>
<keyword id="KW-0547">Nucleotide-binding</keyword>
<keyword id="KW-0648">Protein biosynthesis</keyword>
<reference key="1">
    <citation type="journal article" date="2009" name="Appl. Environ. Microbiol.">
        <title>Three genomes from the phylum Acidobacteria provide insight into the lifestyles of these microorganisms in soils.</title>
        <authorList>
            <person name="Ward N.L."/>
            <person name="Challacombe J.F."/>
            <person name="Janssen P.H."/>
            <person name="Henrissat B."/>
            <person name="Coutinho P.M."/>
            <person name="Wu M."/>
            <person name="Xie G."/>
            <person name="Haft D.H."/>
            <person name="Sait M."/>
            <person name="Badger J."/>
            <person name="Barabote R.D."/>
            <person name="Bradley B."/>
            <person name="Brettin T.S."/>
            <person name="Brinkac L.M."/>
            <person name="Bruce D."/>
            <person name="Creasy T."/>
            <person name="Daugherty S.C."/>
            <person name="Davidsen T.M."/>
            <person name="DeBoy R.T."/>
            <person name="Detter J.C."/>
            <person name="Dodson R.J."/>
            <person name="Durkin A.S."/>
            <person name="Ganapathy A."/>
            <person name="Gwinn-Giglio M."/>
            <person name="Han C.S."/>
            <person name="Khouri H."/>
            <person name="Kiss H."/>
            <person name="Kothari S.P."/>
            <person name="Madupu R."/>
            <person name="Nelson K.E."/>
            <person name="Nelson W.C."/>
            <person name="Paulsen I."/>
            <person name="Penn K."/>
            <person name="Ren Q."/>
            <person name="Rosovitz M.J."/>
            <person name="Selengut J.D."/>
            <person name="Shrivastava S."/>
            <person name="Sullivan S.A."/>
            <person name="Tapia R."/>
            <person name="Thompson L.S."/>
            <person name="Watkins K.L."/>
            <person name="Yang Q."/>
            <person name="Yu C."/>
            <person name="Zafar N."/>
            <person name="Zhou L."/>
            <person name="Kuske C.R."/>
        </authorList>
    </citation>
    <scope>NUCLEOTIDE SEQUENCE [LARGE SCALE GENOMIC DNA]</scope>
    <source>
        <strain>Ellin6076</strain>
    </source>
</reference>
<feature type="chain" id="PRO_0000334821" description="Leucine--tRNA ligase">
    <location>
        <begin position="1"/>
        <end position="810"/>
    </location>
</feature>
<feature type="short sequence motif" description="'HIGH' region">
    <location>
        <begin position="43"/>
        <end position="53"/>
    </location>
</feature>
<feature type="short sequence motif" description="'KMSKS' region">
    <location>
        <begin position="578"/>
        <end position="582"/>
    </location>
</feature>
<feature type="binding site" evidence="1">
    <location>
        <position position="581"/>
    </location>
    <ligand>
        <name>ATP</name>
        <dbReference type="ChEBI" id="CHEBI:30616"/>
    </ligand>
</feature>
<gene>
    <name evidence="1" type="primary">leuS</name>
    <name type="ordered locus">Acid_5844</name>
</gene>
<protein>
    <recommendedName>
        <fullName evidence="1">Leucine--tRNA ligase</fullName>
        <ecNumber evidence="1">6.1.1.4</ecNumber>
    </recommendedName>
    <alternativeName>
        <fullName evidence="1">Leucyl-tRNA synthetase</fullName>
        <shortName evidence="1">LeuRS</shortName>
    </alternativeName>
</protein>
<accession>Q01U81</accession>
<organism>
    <name type="scientific">Solibacter usitatus (strain Ellin6076)</name>
    <dbReference type="NCBI Taxonomy" id="234267"/>
    <lineage>
        <taxon>Bacteria</taxon>
        <taxon>Pseudomonadati</taxon>
        <taxon>Acidobacteriota</taxon>
        <taxon>Terriglobia</taxon>
        <taxon>Bryobacterales</taxon>
        <taxon>Solibacteraceae</taxon>
        <taxon>Candidatus Solibacter</taxon>
    </lineage>
</organism>
<name>SYL_SOLUE</name>
<evidence type="ECO:0000255" key="1">
    <source>
        <dbReference type="HAMAP-Rule" id="MF_00049"/>
    </source>
</evidence>
<dbReference type="EC" id="6.1.1.4" evidence="1"/>
<dbReference type="EMBL" id="CP000473">
    <property type="protein sequence ID" value="ABJ86789.1"/>
    <property type="molecule type" value="Genomic_DNA"/>
</dbReference>
<dbReference type="SMR" id="Q01U81"/>
<dbReference type="FunCoup" id="Q01U81">
    <property type="interactions" value="661"/>
</dbReference>
<dbReference type="STRING" id="234267.Acid_5844"/>
<dbReference type="KEGG" id="sus:Acid_5844"/>
<dbReference type="eggNOG" id="COG0495">
    <property type="taxonomic scope" value="Bacteria"/>
</dbReference>
<dbReference type="HOGENOM" id="CLU_004427_0_0_0"/>
<dbReference type="InParanoid" id="Q01U81"/>
<dbReference type="OrthoDB" id="9810365at2"/>
<dbReference type="GO" id="GO:0005829">
    <property type="term" value="C:cytosol"/>
    <property type="evidence" value="ECO:0007669"/>
    <property type="project" value="TreeGrafter"/>
</dbReference>
<dbReference type="GO" id="GO:0002161">
    <property type="term" value="F:aminoacyl-tRNA deacylase activity"/>
    <property type="evidence" value="ECO:0007669"/>
    <property type="project" value="InterPro"/>
</dbReference>
<dbReference type="GO" id="GO:0005524">
    <property type="term" value="F:ATP binding"/>
    <property type="evidence" value="ECO:0007669"/>
    <property type="project" value="UniProtKB-UniRule"/>
</dbReference>
<dbReference type="GO" id="GO:0004823">
    <property type="term" value="F:leucine-tRNA ligase activity"/>
    <property type="evidence" value="ECO:0007669"/>
    <property type="project" value="UniProtKB-UniRule"/>
</dbReference>
<dbReference type="GO" id="GO:0006429">
    <property type="term" value="P:leucyl-tRNA aminoacylation"/>
    <property type="evidence" value="ECO:0007669"/>
    <property type="project" value="UniProtKB-UniRule"/>
</dbReference>
<dbReference type="CDD" id="cd07958">
    <property type="entry name" value="Anticodon_Ia_Leu_BEm"/>
    <property type="match status" value="1"/>
</dbReference>
<dbReference type="CDD" id="cd00812">
    <property type="entry name" value="LeuRS_core"/>
    <property type="match status" value="1"/>
</dbReference>
<dbReference type="FunFam" id="1.10.730.10:FF:000002">
    <property type="entry name" value="Leucine--tRNA ligase"/>
    <property type="match status" value="1"/>
</dbReference>
<dbReference type="FunFam" id="3.10.20.590:FF:000001">
    <property type="entry name" value="Leucine--tRNA ligase"/>
    <property type="match status" value="1"/>
</dbReference>
<dbReference type="FunFam" id="3.40.50.620:FF:000003">
    <property type="entry name" value="Leucine--tRNA ligase"/>
    <property type="match status" value="1"/>
</dbReference>
<dbReference type="FunFam" id="3.40.50.620:FF:000100">
    <property type="entry name" value="probable leucine--tRNA ligase, mitochondrial"/>
    <property type="match status" value="1"/>
</dbReference>
<dbReference type="Gene3D" id="3.10.20.590">
    <property type="match status" value="1"/>
</dbReference>
<dbReference type="Gene3D" id="3.40.50.620">
    <property type="entry name" value="HUPs"/>
    <property type="match status" value="2"/>
</dbReference>
<dbReference type="Gene3D" id="1.10.730.10">
    <property type="entry name" value="Isoleucyl-tRNA Synthetase, Domain 1"/>
    <property type="match status" value="1"/>
</dbReference>
<dbReference type="HAMAP" id="MF_00049_B">
    <property type="entry name" value="Leu_tRNA_synth_B"/>
    <property type="match status" value="1"/>
</dbReference>
<dbReference type="InterPro" id="IPR001412">
    <property type="entry name" value="aa-tRNA-synth_I_CS"/>
</dbReference>
<dbReference type="InterPro" id="IPR002300">
    <property type="entry name" value="aa-tRNA-synth_Ia"/>
</dbReference>
<dbReference type="InterPro" id="IPR002302">
    <property type="entry name" value="Leu-tRNA-ligase"/>
</dbReference>
<dbReference type="InterPro" id="IPR025709">
    <property type="entry name" value="Leu_tRNA-synth_edit"/>
</dbReference>
<dbReference type="InterPro" id="IPR013155">
    <property type="entry name" value="M/V/L/I-tRNA-synth_anticd-bd"/>
</dbReference>
<dbReference type="InterPro" id="IPR015413">
    <property type="entry name" value="Methionyl/Leucyl_tRNA_Synth"/>
</dbReference>
<dbReference type="InterPro" id="IPR014729">
    <property type="entry name" value="Rossmann-like_a/b/a_fold"/>
</dbReference>
<dbReference type="InterPro" id="IPR009080">
    <property type="entry name" value="tRNAsynth_Ia_anticodon-bd"/>
</dbReference>
<dbReference type="InterPro" id="IPR009008">
    <property type="entry name" value="Val/Leu/Ile-tRNA-synth_edit"/>
</dbReference>
<dbReference type="NCBIfam" id="TIGR00396">
    <property type="entry name" value="leuS_bact"/>
    <property type="match status" value="1"/>
</dbReference>
<dbReference type="PANTHER" id="PTHR43740:SF2">
    <property type="entry name" value="LEUCINE--TRNA LIGASE, MITOCHONDRIAL"/>
    <property type="match status" value="1"/>
</dbReference>
<dbReference type="PANTHER" id="PTHR43740">
    <property type="entry name" value="LEUCYL-TRNA SYNTHETASE"/>
    <property type="match status" value="1"/>
</dbReference>
<dbReference type="Pfam" id="PF08264">
    <property type="entry name" value="Anticodon_1"/>
    <property type="match status" value="1"/>
</dbReference>
<dbReference type="Pfam" id="PF00133">
    <property type="entry name" value="tRNA-synt_1"/>
    <property type="match status" value="1"/>
</dbReference>
<dbReference type="Pfam" id="PF13603">
    <property type="entry name" value="tRNA-synt_1_2"/>
    <property type="match status" value="1"/>
</dbReference>
<dbReference type="Pfam" id="PF09334">
    <property type="entry name" value="tRNA-synt_1g"/>
    <property type="match status" value="1"/>
</dbReference>
<dbReference type="PRINTS" id="PR00985">
    <property type="entry name" value="TRNASYNTHLEU"/>
</dbReference>
<dbReference type="SUPFAM" id="SSF47323">
    <property type="entry name" value="Anticodon-binding domain of a subclass of class I aminoacyl-tRNA synthetases"/>
    <property type="match status" value="1"/>
</dbReference>
<dbReference type="SUPFAM" id="SSF52374">
    <property type="entry name" value="Nucleotidylyl transferase"/>
    <property type="match status" value="1"/>
</dbReference>
<dbReference type="SUPFAM" id="SSF50677">
    <property type="entry name" value="ValRS/IleRS/LeuRS editing domain"/>
    <property type="match status" value="1"/>
</dbReference>
<dbReference type="PROSITE" id="PS00178">
    <property type="entry name" value="AA_TRNA_LIGASE_I"/>
    <property type="match status" value="1"/>
</dbReference>
<comment type="catalytic activity">
    <reaction evidence="1">
        <text>tRNA(Leu) + L-leucine + ATP = L-leucyl-tRNA(Leu) + AMP + diphosphate</text>
        <dbReference type="Rhea" id="RHEA:11688"/>
        <dbReference type="Rhea" id="RHEA-COMP:9613"/>
        <dbReference type="Rhea" id="RHEA-COMP:9622"/>
        <dbReference type="ChEBI" id="CHEBI:30616"/>
        <dbReference type="ChEBI" id="CHEBI:33019"/>
        <dbReference type="ChEBI" id="CHEBI:57427"/>
        <dbReference type="ChEBI" id="CHEBI:78442"/>
        <dbReference type="ChEBI" id="CHEBI:78494"/>
        <dbReference type="ChEBI" id="CHEBI:456215"/>
        <dbReference type="EC" id="6.1.1.4"/>
    </reaction>
</comment>
<comment type="subcellular location">
    <subcellularLocation>
        <location evidence="1">Cytoplasm</location>
    </subcellularLocation>
</comment>
<comment type="similarity">
    <text evidence="1">Belongs to the class-I aminoacyl-tRNA synthetase family.</text>
</comment>
<sequence>MPEKPYDHIAIELKWHERWQDAQFYKAEENSAKPKFYVLEMLPYPSGTLHIGHIRNYSIGDALARYKWMRGFNVLHPMGWDAFGLPAENAAIANKVPPRQWTLQNIAAMKKTHRRFAFSYDWDREVSTCEPEYYRWNQWFFLRMLERGLAYRKRALVNWCPKCATVLANEQVVDGCCWRHEGTPVEQRALDQWFLKITDYADQLLDEMARLEGGWPERVLTMQRNWIGRSEGAEIDFTLAGAGTPIRVFTTRVDTIYGATSVILAPEHPLNETLLDSEKKAKAKAMVDSRAGRDPGDIDKEGFFTGHYAVNPYNGEQVPIWIANFVLMGYGTGAIMAVPAHDERDFEFCTKYGIPITPVIRPVDQPAGEPVALPYGEYGILENSGEWSGLASAEARRQMSAYAEQHGFGKSAITFRIKDWGISRQRYWGTPIPVIHCPSCGVVPVPDDQLPVVLPDRIEITGAGRSPLENVPEFVNVACPKCGEPARRETDTMDTFVDSSWYFYRYCDPHNSERPFDPAKIAYWFEIDQYIGGIEHAILHLIYSRFFTKVMRDIGLISNNEPARRLFTQGMVIAEGAKMSKSKGNVVGADLLADKFGADTARMFVLSNVPPEKEVDWREEGAEGTYRFLGRVYRFTTRNVPAQQRSGDADRKVVRKLHQTLKKITEDFETRWHFNTCIASIMELVNLLYAEEQNISAAVMPQILESLALMLAPFAPYLSQEMWEEIGKEGPVFRQAWPAFDPELAKEEGAEIVVQVNGKVRTRITAPFGTAKEELESRSLAHEKVKPFIDGKQVMKIITVPDKLVNIVVK</sequence>